<sequence length="151" mass="16007">MRTFESVADLAAAAGEKVGQSDWVTITQEEVNLFADATGDHQWIHVDPERAAAGPFGTTIAHGFMTLALLPRLQHQMYTVKGVKLAINYGLNKVRFPAPVPVGSRVRATSSLVGVEDLGNGTVQATVSTTVEVEGSAKPACVAESIVRYVA</sequence>
<reference key="1">
    <citation type="journal article" date="2002" name="J. Bacteriol.">
        <title>Whole-genome comparison of Mycobacterium tuberculosis clinical and laboratory strains.</title>
        <authorList>
            <person name="Fleischmann R.D."/>
            <person name="Alland D."/>
            <person name="Eisen J.A."/>
            <person name="Carpenter L."/>
            <person name="White O."/>
            <person name="Peterson J.D."/>
            <person name="DeBoy R.T."/>
            <person name="Dodson R.J."/>
            <person name="Gwinn M.L."/>
            <person name="Haft D.H."/>
            <person name="Hickey E.K."/>
            <person name="Kolonay J.F."/>
            <person name="Nelson W.C."/>
            <person name="Umayam L.A."/>
            <person name="Ermolaeva M.D."/>
            <person name="Salzberg S.L."/>
            <person name="Delcher A."/>
            <person name="Utterback T.R."/>
            <person name="Weidman J.F."/>
            <person name="Khouri H.M."/>
            <person name="Gill J."/>
            <person name="Mikula A."/>
            <person name="Bishai W."/>
            <person name="Jacobs W.R. Jr."/>
            <person name="Venter J.C."/>
            <person name="Fraser C.M."/>
        </authorList>
    </citation>
    <scope>NUCLEOTIDE SEQUENCE [LARGE SCALE GENOMIC DNA]</scope>
    <source>
        <strain>CDC 1551 / Oshkosh</strain>
    </source>
</reference>
<feature type="chain" id="PRO_0000427092" description="3-hydroxyacyl-thioester dehydratase Z">
    <location>
        <begin position="1"/>
        <end position="151"/>
    </location>
</feature>
<feature type="domain" description="MaoC-like" evidence="2">
    <location>
        <begin position="11"/>
        <end position="131"/>
    </location>
</feature>
<feature type="binding site" evidence="1">
    <location>
        <begin position="60"/>
        <end position="63"/>
    </location>
    <ligand>
        <name>substrate</name>
    </ligand>
</feature>
<feature type="binding site" description="in homodimeric partner" evidence="1">
    <location>
        <begin position="86"/>
        <end position="89"/>
    </location>
    <ligand>
        <name>substrate</name>
    </ligand>
</feature>
<feature type="binding site" evidence="1">
    <location>
        <begin position="97"/>
        <end position="99"/>
    </location>
    <ligand>
        <name>substrate</name>
    </ligand>
</feature>
<feature type="binding site" description="in homodimeric partner" evidence="1">
    <location>
        <position position="124"/>
    </location>
    <ligand>
        <name>substrate</name>
    </ligand>
</feature>
<feature type="binding site" description="in homodimeric partner" evidence="1">
    <location>
        <position position="148"/>
    </location>
    <ligand>
        <name>substrate</name>
    </ligand>
</feature>
<feature type="site" description="Important for catalytic activity" evidence="1">
    <location>
        <position position="40"/>
    </location>
</feature>
<feature type="site" description="Transition state stabilizer" evidence="2">
    <location>
        <position position="42"/>
    </location>
</feature>
<feature type="site" description="Important for catalytic activity" evidence="1">
    <location>
        <position position="45"/>
    </location>
</feature>
<accession>P9WNP2</accession>
<accession>L0T2P7</accession>
<accession>P96807</accession>
<accession>Q7DAF4</accession>
<name>HTDZ_MYCTO</name>
<organism>
    <name type="scientific">Mycobacterium tuberculosis (strain CDC 1551 / Oshkosh)</name>
    <dbReference type="NCBI Taxonomy" id="83331"/>
    <lineage>
        <taxon>Bacteria</taxon>
        <taxon>Bacillati</taxon>
        <taxon>Actinomycetota</taxon>
        <taxon>Actinomycetes</taxon>
        <taxon>Mycobacteriales</taxon>
        <taxon>Mycobacteriaceae</taxon>
        <taxon>Mycobacterium</taxon>
        <taxon>Mycobacterium tuberculosis complex</taxon>
    </lineage>
</organism>
<evidence type="ECO:0000250" key="1">
    <source>
        <dbReference type="UniProtKB" id="P9WNP3"/>
    </source>
</evidence>
<evidence type="ECO:0000255" key="2"/>
<evidence type="ECO:0000305" key="3"/>
<keyword id="KW-0276">Fatty acid metabolism</keyword>
<keyword id="KW-0443">Lipid metabolism</keyword>
<keyword id="KW-0456">Lyase</keyword>
<keyword id="KW-1185">Reference proteome</keyword>
<proteinExistence type="inferred from homology"/>
<dbReference type="EC" id="4.2.1.-" evidence="1"/>
<dbReference type="EC" id="4.2.1.119" evidence="1"/>
<dbReference type="EMBL" id="AE000516">
    <property type="protein sequence ID" value="AAK44362.1"/>
    <property type="molecule type" value="Genomic_DNA"/>
</dbReference>
<dbReference type="PIR" id="E70615">
    <property type="entry name" value="E70615"/>
</dbReference>
<dbReference type="RefSeq" id="WP_003400912.1">
    <property type="nucleotide sequence ID" value="NZ_KK341227.1"/>
</dbReference>
<dbReference type="SMR" id="P9WNP2"/>
<dbReference type="GeneID" id="45424096"/>
<dbReference type="KEGG" id="mtc:MT0138"/>
<dbReference type="PATRIC" id="fig|83331.31.peg.150"/>
<dbReference type="HOGENOM" id="CLU_108911_0_0_11"/>
<dbReference type="Proteomes" id="UP000001020">
    <property type="component" value="Chromosome"/>
</dbReference>
<dbReference type="GO" id="GO:0016829">
    <property type="term" value="F:lyase activity"/>
    <property type="evidence" value="ECO:0007669"/>
    <property type="project" value="UniProtKB-KW"/>
</dbReference>
<dbReference type="GO" id="GO:0006631">
    <property type="term" value="P:fatty acid metabolic process"/>
    <property type="evidence" value="ECO:0007669"/>
    <property type="project" value="UniProtKB-KW"/>
</dbReference>
<dbReference type="CDD" id="cd03450">
    <property type="entry name" value="NodN"/>
    <property type="match status" value="1"/>
</dbReference>
<dbReference type="FunFam" id="3.10.129.10:FF:000053">
    <property type="entry name" value="Probable enoyl-CoA hydratase 1"/>
    <property type="match status" value="1"/>
</dbReference>
<dbReference type="Gene3D" id="3.10.129.10">
    <property type="entry name" value="Hotdog Thioesterase"/>
    <property type="match status" value="1"/>
</dbReference>
<dbReference type="InterPro" id="IPR029069">
    <property type="entry name" value="HotDog_dom_sf"/>
</dbReference>
<dbReference type="InterPro" id="IPR002539">
    <property type="entry name" value="MaoC-like_dom"/>
</dbReference>
<dbReference type="InterPro" id="IPR039375">
    <property type="entry name" value="NodN-like"/>
</dbReference>
<dbReference type="PANTHER" id="PTHR42993">
    <property type="entry name" value="MAOC-LIKE DEHYDRATASE DOMAIN-CONTAINING PROTEIN"/>
    <property type="match status" value="1"/>
</dbReference>
<dbReference type="PANTHER" id="PTHR42993:SF1">
    <property type="entry name" value="MAOC-LIKE DEHYDRATASE DOMAIN-CONTAINING PROTEIN"/>
    <property type="match status" value="1"/>
</dbReference>
<dbReference type="Pfam" id="PF01575">
    <property type="entry name" value="MaoC_dehydratas"/>
    <property type="match status" value="1"/>
</dbReference>
<dbReference type="SUPFAM" id="SSF54637">
    <property type="entry name" value="Thioesterase/thiol ester dehydrase-isomerase"/>
    <property type="match status" value="1"/>
</dbReference>
<gene>
    <name evidence="1" type="primary">htdZ</name>
    <name type="ordered locus">MT0138</name>
</gene>
<protein>
    <recommendedName>
        <fullName evidence="1">3-hydroxyacyl-thioester dehydratase Z</fullName>
        <ecNumber evidence="1">4.2.1.-</ecNumber>
    </recommendedName>
    <alternativeName>
        <fullName evidence="3">Enoyl-CoA hydratase 2</fullName>
        <ecNumber evidence="1">4.2.1.119</ecNumber>
    </alternativeName>
    <alternativeName>
        <fullName>N-related protein</fullName>
    </alternativeName>
    <alternativeName>
        <fullName>Nodulation protein</fullName>
    </alternativeName>
</protein>
<comment type="function">
    <text evidence="1">Shows trans-enoyl-CoA hydratase/3-hydroxyacyl-CoA dehydratase activity.</text>
</comment>
<comment type="catalytic activity">
    <reaction evidence="1">
        <text>a (3R)-3-hydroxyacyl-CoA = a (2E)-enoyl-CoA + H2O</text>
        <dbReference type="Rhea" id="RHEA:26526"/>
        <dbReference type="ChEBI" id="CHEBI:15377"/>
        <dbReference type="ChEBI" id="CHEBI:57319"/>
        <dbReference type="ChEBI" id="CHEBI:58856"/>
        <dbReference type="EC" id="4.2.1.119"/>
    </reaction>
</comment>
<comment type="subunit">
    <text evidence="1">Homodimer.</text>
</comment>
<comment type="similarity">
    <text evidence="3">Belongs to the enoyl-CoA hydratase/isomerase family.</text>
</comment>